<name>SYY_GEOMG</name>
<protein>
    <recommendedName>
        <fullName evidence="1">Tyrosine--tRNA ligase</fullName>
        <ecNumber evidence="1">6.1.1.1</ecNumber>
    </recommendedName>
    <alternativeName>
        <fullName evidence="1">Tyrosyl-tRNA synthetase</fullName>
        <shortName evidence="1">TyrRS</shortName>
    </alternativeName>
</protein>
<organism>
    <name type="scientific">Geobacter metallireducens (strain ATCC 53774 / DSM 7210 / GS-15)</name>
    <dbReference type="NCBI Taxonomy" id="269799"/>
    <lineage>
        <taxon>Bacteria</taxon>
        <taxon>Pseudomonadati</taxon>
        <taxon>Thermodesulfobacteriota</taxon>
        <taxon>Desulfuromonadia</taxon>
        <taxon>Geobacterales</taxon>
        <taxon>Geobacteraceae</taxon>
        <taxon>Geobacter</taxon>
    </lineage>
</organism>
<keyword id="KW-0030">Aminoacyl-tRNA synthetase</keyword>
<keyword id="KW-0067">ATP-binding</keyword>
<keyword id="KW-0963">Cytoplasm</keyword>
<keyword id="KW-0436">Ligase</keyword>
<keyword id="KW-0547">Nucleotide-binding</keyword>
<keyword id="KW-0648">Protein biosynthesis</keyword>
<keyword id="KW-1185">Reference proteome</keyword>
<keyword id="KW-0694">RNA-binding</keyword>
<feature type="chain" id="PRO_0000236720" description="Tyrosine--tRNA ligase">
    <location>
        <begin position="1"/>
        <end position="403"/>
    </location>
</feature>
<feature type="domain" description="S4 RNA-binding" evidence="1">
    <location>
        <begin position="341"/>
        <end position="402"/>
    </location>
</feature>
<feature type="short sequence motif" description="'HIGH' region">
    <location>
        <begin position="45"/>
        <end position="54"/>
    </location>
</feature>
<feature type="short sequence motif" description="'KMSKS' region">
    <location>
        <begin position="229"/>
        <end position="233"/>
    </location>
</feature>
<feature type="binding site" evidence="1">
    <location>
        <position position="232"/>
    </location>
    <ligand>
        <name>ATP</name>
        <dbReference type="ChEBI" id="CHEBI:30616"/>
    </ligand>
</feature>
<dbReference type="EC" id="6.1.1.1" evidence="1"/>
<dbReference type="EMBL" id="CP000148">
    <property type="protein sequence ID" value="ABB31420.1"/>
    <property type="molecule type" value="Genomic_DNA"/>
</dbReference>
<dbReference type="RefSeq" id="WP_004513448.1">
    <property type="nucleotide sequence ID" value="NC_007517.1"/>
</dbReference>
<dbReference type="SMR" id="Q39WF4"/>
<dbReference type="STRING" id="269799.Gmet_1182"/>
<dbReference type="KEGG" id="gme:Gmet_1182"/>
<dbReference type="eggNOG" id="COG0162">
    <property type="taxonomic scope" value="Bacteria"/>
</dbReference>
<dbReference type="HOGENOM" id="CLU_024003_5_0_7"/>
<dbReference type="Proteomes" id="UP000007073">
    <property type="component" value="Chromosome"/>
</dbReference>
<dbReference type="GO" id="GO:0005829">
    <property type="term" value="C:cytosol"/>
    <property type="evidence" value="ECO:0007669"/>
    <property type="project" value="TreeGrafter"/>
</dbReference>
<dbReference type="GO" id="GO:0005524">
    <property type="term" value="F:ATP binding"/>
    <property type="evidence" value="ECO:0007669"/>
    <property type="project" value="UniProtKB-UniRule"/>
</dbReference>
<dbReference type="GO" id="GO:0003723">
    <property type="term" value="F:RNA binding"/>
    <property type="evidence" value="ECO:0007669"/>
    <property type="project" value="UniProtKB-KW"/>
</dbReference>
<dbReference type="GO" id="GO:0004831">
    <property type="term" value="F:tyrosine-tRNA ligase activity"/>
    <property type="evidence" value="ECO:0007669"/>
    <property type="project" value="UniProtKB-UniRule"/>
</dbReference>
<dbReference type="GO" id="GO:0006437">
    <property type="term" value="P:tyrosyl-tRNA aminoacylation"/>
    <property type="evidence" value="ECO:0007669"/>
    <property type="project" value="UniProtKB-UniRule"/>
</dbReference>
<dbReference type="CDD" id="cd00165">
    <property type="entry name" value="S4"/>
    <property type="match status" value="1"/>
</dbReference>
<dbReference type="CDD" id="cd00805">
    <property type="entry name" value="TyrRS_core"/>
    <property type="match status" value="1"/>
</dbReference>
<dbReference type="FunFam" id="1.10.240.10:FF:000006">
    <property type="entry name" value="Tyrosine--tRNA ligase"/>
    <property type="match status" value="1"/>
</dbReference>
<dbReference type="FunFam" id="3.40.50.620:FF:000061">
    <property type="entry name" value="Tyrosine--tRNA ligase"/>
    <property type="match status" value="1"/>
</dbReference>
<dbReference type="Gene3D" id="3.40.50.620">
    <property type="entry name" value="HUPs"/>
    <property type="match status" value="1"/>
</dbReference>
<dbReference type="Gene3D" id="3.10.290.10">
    <property type="entry name" value="RNA-binding S4 domain"/>
    <property type="match status" value="1"/>
</dbReference>
<dbReference type="Gene3D" id="1.10.240.10">
    <property type="entry name" value="Tyrosyl-Transfer RNA Synthetase"/>
    <property type="match status" value="1"/>
</dbReference>
<dbReference type="HAMAP" id="MF_02007">
    <property type="entry name" value="Tyr_tRNA_synth_type2"/>
    <property type="match status" value="1"/>
</dbReference>
<dbReference type="InterPro" id="IPR001412">
    <property type="entry name" value="aa-tRNA-synth_I_CS"/>
</dbReference>
<dbReference type="InterPro" id="IPR002305">
    <property type="entry name" value="aa-tRNA-synth_Ic"/>
</dbReference>
<dbReference type="InterPro" id="IPR014729">
    <property type="entry name" value="Rossmann-like_a/b/a_fold"/>
</dbReference>
<dbReference type="InterPro" id="IPR002942">
    <property type="entry name" value="S4_RNA-bd"/>
</dbReference>
<dbReference type="InterPro" id="IPR036986">
    <property type="entry name" value="S4_RNA-bd_sf"/>
</dbReference>
<dbReference type="InterPro" id="IPR002307">
    <property type="entry name" value="Tyr-tRNA-ligase"/>
</dbReference>
<dbReference type="InterPro" id="IPR024088">
    <property type="entry name" value="Tyr-tRNA-ligase_bac-type"/>
</dbReference>
<dbReference type="InterPro" id="IPR024108">
    <property type="entry name" value="Tyr-tRNA-ligase_bac_2"/>
</dbReference>
<dbReference type="NCBIfam" id="TIGR00234">
    <property type="entry name" value="tyrS"/>
    <property type="match status" value="1"/>
</dbReference>
<dbReference type="PANTHER" id="PTHR11766:SF1">
    <property type="entry name" value="TYROSINE--TRNA LIGASE"/>
    <property type="match status" value="1"/>
</dbReference>
<dbReference type="PANTHER" id="PTHR11766">
    <property type="entry name" value="TYROSYL-TRNA SYNTHETASE"/>
    <property type="match status" value="1"/>
</dbReference>
<dbReference type="Pfam" id="PF01479">
    <property type="entry name" value="S4"/>
    <property type="match status" value="1"/>
</dbReference>
<dbReference type="Pfam" id="PF00579">
    <property type="entry name" value="tRNA-synt_1b"/>
    <property type="match status" value="1"/>
</dbReference>
<dbReference type="PRINTS" id="PR01040">
    <property type="entry name" value="TRNASYNTHTYR"/>
</dbReference>
<dbReference type="SMART" id="SM00363">
    <property type="entry name" value="S4"/>
    <property type="match status" value="1"/>
</dbReference>
<dbReference type="SUPFAM" id="SSF55174">
    <property type="entry name" value="Alpha-L RNA-binding motif"/>
    <property type="match status" value="1"/>
</dbReference>
<dbReference type="SUPFAM" id="SSF52374">
    <property type="entry name" value="Nucleotidylyl transferase"/>
    <property type="match status" value="1"/>
</dbReference>
<dbReference type="PROSITE" id="PS00178">
    <property type="entry name" value="AA_TRNA_LIGASE_I"/>
    <property type="match status" value="1"/>
</dbReference>
<dbReference type="PROSITE" id="PS50889">
    <property type="entry name" value="S4"/>
    <property type="match status" value="1"/>
</dbReference>
<evidence type="ECO:0000255" key="1">
    <source>
        <dbReference type="HAMAP-Rule" id="MF_02007"/>
    </source>
</evidence>
<sequence>MSVAEQMAIIKRGATEILLEKELEEKIEKSLSTGVPLRIKAGFDPTAPDLHLGHTVLLHKMRQFQQLGHEVCFLIGDFTGMIGDPTGKSETRKALTREDVLKNAETYKEQVFKILDPKKTRVVFNSEWLGKMTASDMIGLAAQSTVARMLERDDFGKRFANQLPISIHEFLYPLIQGYDSVALKADVELGGTDQKFNLLVGRELQRVWKQSPQSVITMPLLEGLDGVNKMSKSLGNYIGINEPADEIFGKIMSISDELMLRYYELLSDLTLAEIEKLKAAMRDGDVHPMAAKKQLAREIVARYHGAVAADNAEESFVRRFRDNQTPEEMPECILSAEEGKVLLGRLLAEAGLVKSNSEGRRAINQGGVKVNGEKVTNDMLELPGVGEYVLQFGKRRFARIVFK</sequence>
<gene>
    <name evidence="1" type="primary">tyrS</name>
    <name type="ordered locus">Gmet_1182</name>
</gene>
<reference key="1">
    <citation type="journal article" date="2009" name="BMC Microbiol.">
        <title>The genome sequence of Geobacter metallireducens: features of metabolism, physiology and regulation common and dissimilar to Geobacter sulfurreducens.</title>
        <authorList>
            <person name="Aklujkar M."/>
            <person name="Krushkal J."/>
            <person name="DiBartolo G."/>
            <person name="Lapidus A."/>
            <person name="Land M.L."/>
            <person name="Lovley D.R."/>
        </authorList>
    </citation>
    <scope>NUCLEOTIDE SEQUENCE [LARGE SCALE GENOMIC DNA]</scope>
    <source>
        <strain>ATCC 53774 / DSM 7210 / GS-15</strain>
    </source>
</reference>
<proteinExistence type="inferred from homology"/>
<comment type="function">
    <text evidence="1">Catalyzes the attachment of tyrosine to tRNA(Tyr) in a two-step reaction: tyrosine is first activated by ATP to form Tyr-AMP and then transferred to the acceptor end of tRNA(Tyr).</text>
</comment>
<comment type="catalytic activity">
    <reaction evidence="1">
        <text>tRNA(Tyr) + L-tyrosine + ATP = L-tyrosyl-tRNA(Tyr) + AMP + diphosphate + H(+)</text>
        <dbReference type="Rhea" id="RHEA:10220"/>
        <dbReference type="Rhea" id="RHEA-COMP:9706"/>
        <dbReference type="Rhea" id="RHEA-COMP:9707"/>
        <dbReference type="ChEBI" id="CHEBI:15378"/>
        <dbReference type="ChEBI" id="CHEBI:30616"/>
        <dbReference type="ChEBI" id="CHEBI:33019"/>
        <dbReference type="ChEBI" id="CHEBI:58315"/>
        <dbReference type="ChEBI" id="CHEBI:78442"/>
        <dbReference type="ChEBI" id="CHEBI:78536"/>
        <dbReference type="ChEBI" id="CHEBI:456215"/>
        <dbReference type="EC" id="6.1.1.1"/>
    </reaction>
</comment>
<comment type="subunit">
    <text evidence="1">Homodimer.</text>
</comment>
<comment type="subcellular location">
    <subcellularLocation>
        <location evidence="1">Cytoplasm</location>
    </subcellularLocation>
</comment>
<comment type="similarity">
    <text evidence="1">Belongs to the class-I aminoacyl-tRNA synthetase family. TyrS type 2 subfamily.</text>
</comment>
<accession>Q39WF4</accession>